<reference key="1">
    <citation type="journal article" date="2000" name="Nature">
        <title>Sequence and analysis of chromosome 1 of the plant Arabidopsis thaliana.</title>
        <authorList>
            <person name="Theologis A."/>
            <person name="Ecker J.R."/>
            <person name="Palm C.J."/>
            <person name="Federspiel N.A."/>
            <person name="Kaul S."/>
            <person name="White O."/>
            <person name="Alonso J."/>
            <person name="Altafi H."/>
            <person name="Araujo R."/>
            <person name="Bowman C.L."/>
            <person name="Brooks S.Y."/>
            <person name="Buehler E."/>
            <person name="Chan A."/>
            <person name="Chao Q."/>
            <person name="Chen H."/>
            <person name="Cheuk R.F."/>
            <person name="Chin C.W."/>
            <person name="Chung M.K."/>
            <person name="Conn L."/>
            <person name="Conway A.B."/>
            <person name="Conway A.R."/>
            <person name="Creasy T.H."/>
            <person name="Dewar K."/>
            <person name="Dunn P."/>
            <person name="Etgu P."/>
            <person name="Feldblyum T.V."/>
            <person name="Feng J.-D."/>
            <person name="Fong B."/>
            <person name="Fujii C.Y."/>
            <person name="Gill J.E."/>
            <person name="Goldsmith A.D."/>
            <person name="Haas B."/>
            <person name="Hansen N.F."/>
            <person name="Hughes B."/>
            <person name="Huizar L."/>
            <person name="Hunter J.L."/>
            <person name="Jenkins J."/>
            <person name="Johnson-Hopson C."/>
            <person name="Khan S."/>
            <person name="Khaykin E."/>
            <person name="Kim C.J."/>
            <person name="Koo H.L."/>
            <person name="Kremenetskaia I."/>
            <person name="Kurtz D.B."/>
            <person name="Kwan A."/>
            <person name="Lam B."/>
            <person name="Langin-Hooper S."/>
            <person name="Lee A."/>
            <person name="Lee J.M."/>
            <person name="Lenz C.A."/>
            <person name="Li J.H."/>
            <person name="Li Y.-P."/>
            <person name="Lin X."/>
            <person name="Liu S.X."/>
            <person name="Liu Z.A."/>
            <person name="Luros J.S."/>
            <person name="Maiti R."/>
            <person name="Marziali A."/>
            <person name="Militscher J."/>
            <person name="Miranda M."/>
            <person name="Nguyen M."/>
            <person name="Nierman W.C."/>
            <person name="Osborne B.I."/>
            <person name="Pai G."/>
            <person name="Peterson J."/>
            <person name="Pham P.K."/>
            <person name="Rizzo M."/>
            <person name="Rooney T."/>
            <person name="Rowley D."/>
            <person name="Sakano H."/>
            <person name="Salzberg S.L."/>
            <person name="Schwartz J.R."/>
            <person name="Shinn P."/>
            <person name="Southwick A.M."/>
            <person name="Sun H."/>
            <person name="Tallon L.J."/>
            <person name="Tambunga G."/>
            <person name="Toriumi M.J."/>
            <person name="Town C.D."/>
            <person name="Utterback T."/>
            <person name="Van Aken S."/>
            <person name="Vaysberg M."/>
            <person name="Vysotskaia V.S."/>
            <person name="Walker M."/>
            <person name="Wu D."/>
            <person name="Yu G."/>
            <person name="Fraser C.M."/>
            <person name="Venter J.C."/>
            <person name="Davis R.W."/>
        </authorList>
    </citation>
    <scope>NUCLEOTIDE SEQUENCE [LARGE SCALE GENOMIC DNA]</scope>
    <source>
        <strain>cv. Columbia</strain>
    </source>
</reference>
<reference key="2">
    <citation type="journal article" date="2017" name="Plant J.">
        <title>Araport11: a complete reannotation of the Arabidopsis thaliana reference genome.</title>
        <authorList>
            <person name="Cheng C.Y."/>
            <person name="Krishnakumar V."/>
            <person name="Chan A.P."/>
            <person name="Thibaud-Nissen F."/>
            <person name="Schobel S."/>
            <person name="Town C.D."/>
        </authorList>
    </citation>
    <scope>GENOME REANNOTATION</scope>
    <source>
        <strain>cv. Columbia</strain>
    </source>
</reference>
<reference key="3">
    <citation type="submission" date="2005-05" db="EMBL/GenBank/DDBJ databases">
        <authorList>
            <person name="Underwood B.A."/>
            <person name="Xiao Y.-L."/>
            <person name="Moskal W.A. Jr."/>
            <person name="Monaghan E.L."/>
            <person name="Wang W."/>
            <person name="Redman J.C."/>
            <person name="Wu H.C."/>
            <person name="Utterback T."/>
            <person name="Town C.D."/>
        </authorList>
    </citation>
    <scope>NUCLEOTIDE SEQUENCE [LARGE SCALE MRNA]</scope>
    <source>
        <strain>cv. Columbia</strain>
    </source>
</reference>
<reference key="4">
    <citation type="journal article" date="2005" name="J. Mol. Evol.">
        <title>Evolution of NIN-like proteins in Arabidopsis, rice, and Lotus japonicus.</title>
        <authorList>
            <person name="Schauser L."/>
            <person name="Wieloch W."/>
            <person name="Stougaard J."/>
        </authorList>
    </citation>
    <scope>GENE FAMILY</scope>
    <scope>NOMENCLATURE</scope>
</reference>
<sequence length="298" mass="33888">MADHTTKEQKSFSFLAHSPSFDHSSLSYPLFDWEEDLLALQENSGSQAFPFTTTSLPLPDLEPLSEDVLNSYSSASWNETEQNRGDGASSEKKRENGTVKETTKKRKINERHREHSVRIISDITTYTTSSAPTTLSKETVSRYFYMPITQAAIALNVGLTLLKRRCRELGIRRWPHRKLMSLNTLISNVKELQKMEGEENAEKLQDALEMLEKEKRTIEDLPDLEFKDKTKRLRQACFKANHKRKKKRSLKSDQSQVPSCSSSGSVPSDESVDEAGMESDEEMKYLLCGFSSEFTSGL</sequence>
<keyword id="KW-0175">Coiled coil</keyword>
<keyword id="KW-0238">DNA-binding</keyword>
<keyword id="KW-0539">Nucleus</keyword>
<keyword id="KW-1185">Reference proteome</keyword>
<keyword id="KW-0804">Transcription</keyword>
<keyword id="KW-0805">Transcription regulation</keyword>
<protein>
    <recommendedName>
        <fullName>Protein RKD2</fullName>
        <shortName>AtRKD2</shortName>
    </recommendedName>
    <alternativeName>
        <fullName>RWP-RK domain-containing protein 2</fullName>
    </alternativeName>
</protein>
<proteinExistence type="evidence at transcript level"/>
<evidence type="ECO:0000250" key="1"/>
<evidence type="ECO:0000255" key="2"/>
<evidence type="ECO:0000255" key="3">
    <source>
        <dbReference type="PROSITE-ProRule" id="PRU00852"/>
    </source>
</evidence>
<evidence type="ECO:0000256" key="4">
    <source>
        <dbReference type="SAM" id="MobiDB-lite"/>
    </source>
</evidence>
<feature type="chain" id="PRO_0000401496" description="Protein RKD2">
    <location>
        <begin position="1"/>
        <end position="298"/>
    </location>
</feature>
<feature type="domain" description="RWP-RK" evidence="3">
    <location>
        <begin position="121"/>
        <end position="203"/>
    </location>
</feature>
<feature type="region of interest" description="Disordered" evidence="4">
    <location>
        <begin position="1"/>
        <end position="22"/>
    </location>
</feature>
<feature type="region of interest" description="Disordered" evidence="4">
    <location>
        <begin position="73"/>
        <end position="112"/>
    </location>
</feature>
<feature type="region of interest" description="Disordered" evidence="4">
    <location>
        <begin position="241"/>
        <end position="279"/>
    </location>
</feature>
<feature type="coiled-coil region" evidence="2">
    <location>
        <begin position="188"/>
        <end position="222"/>
    </location>
</feature>
<feature type="compositionally biased region" description="Basic and acidic residues" evidence="4">
    <location>
        <begin position="1"/>
        <end position="10"/>
    </location>
</feature>
<feature type="compositionally biased region" description="Basic and acidic residues" evidence="4">
    <location>
        <begin position="81"/>
        <end position="102"/>
    </location>
</feature>
<feature type="compositionally biased region" description="Low complexity" evidence="4">
    <location>
        <begin position="252"/>
        <end position="269"/>
    </location>
</feature>
<feature type="compositionally biased region" description="Acidic residues" evidence="4">
    <location>
        <begin position="270"/>
        <end position="279"/>
    </location>
</feature>
<gene>
    <name type="primary">RKD2</name>
    <name type="ordered locus">At1g74480</name>
    <name type="ORF">F1M20.16</name>
</gene>
<name>RKD2_ARATH</name>
<accession>Q9CA66</accession>
<comment type="function">
    <text evidence="1">Putative transcription factor.</text>
</comment>
<comment type="subcellular location">
    <subcellularLocation>
        <location evidence="3">Nucleus</location>
    </subcellularLocation>
</comment>
<dbReference type="EMBL" id="AC011765">
    <property type="protein sequence ID" value="AAG52376.1"/>
    <property type="molecule type" value="Genomic_DNA"/>
</dbReference>
<dbReference type="EMBL" id="CP002684">
    <property type="protein sequence ID" value="AEE35598.1"/>
    <property type="molecule type" value="Genomic_DNA"/>
</dbReference>
<dbReference type="EMBL" id="DQ056518">
    <property type="protein sequence ID" value="AAY78674.1"/>
    <property type="molecule type" value="mRNA"/>
</dbReference>
<dbReference type="PIR" id="G96773">
    <property type="entry name" value="G96773"/>
</dbReference>
<dbReference type="RefSeq" id="NP_177588.1">
    <property type="nucleotide sequence ID" value="NM_106108.1"/>
</dbReference>
<dbReference type="BioGRID" id="29008">
    <property type="interactions" value="3"/>
</dbReference>
<dbReference type="IntAct" id="Q9CA66">
    <property type="interactions" value="3"/>
</dbReference>
<dbReference type="STRING" id="3702.Q9CA66"/>
<dbReference type="PaxDb" id="3702-AT1G74480.1"/>
<dbReference type="ProteomicsDB" id="234715"/>
<dbReference type="EnsemblPlants" id="AT1G74480.1">
    <property type="protein sequence ID" value="AT1G74480.1"/>
    <property type="gene ID" value="AT1G74480"/>
</dbReference>
<dbReference type="GeneID" id="843789"/>
<dbReference type="Gramene" id="AT1G74480.1">
    <property type="protein sequence ID" value="AT1G74480.1"/>
    <property type="gene ID" value="AT1G74480"/>
</dbReference>
<dbReference type="KEGG" id="ath:AT1G74480"/>
<dbReference type="Araport" id="AT1G74480"/>
<dbReference type="TAIR" id="AT1G74480">
    <property type="gene designation" value="RKD2"/>
</dbReference>
<dbReference type="eggNOG" id="ENOG502QSPQ">
    <property type="taxonomic scope" value="Eukaryota"/>
</dbReference>
<dbReference type="HOGENOM" id="CLU_071153_0_0_1"/>
<dbReference type="InParanoid" id="Q9CA66"/>
<dbReference type="OMA" id="YPLFDWE"/>
<dbReference type="OrthoDB" id="6270329at2759"/>
<dbReference type="PhylomeDB" id="Q9CA66"/>
<dbReference type="PRO" id="PR:Q9CA66"/>
<dbReference type="Proteomes" id="UP000006548">
    <property type="component" value="Chromosome 1"/>
</dbReference>
<dbReference type="ExpressionAtlas" id="Q9CA66">
    <property type="expression patterns" value="baseline and differential"/>
</dbReference>
<dbReference type="GO" id="GO:0005634">
    <property type="term" value="C:nucleus"/>
    <property type="evidence" value="ECO:0007669"/>
    <property type="project" value="UniProtKB-SubCell"/>
</dbReference>
<dbReference type="GO" id="GO:0003677">
    <property type="term" value="F:DNA binding"/>
    <property type="evidence" value="ECO:0007669"/>
    <property type="project" value="UniProtKB-KW"/>
</dbReference>
<dbReference type="GO" id="GO:0003700">
    <property type="term" value="F:DNA-binding transcription factor activity"/>
    <property type="evidence" value="ECO:0000250"/>
    <property type="project" value="TAIR"/>
</dbReference>
<dbReference type="GO" id="GO:0006355">
    <property type="term" value="P:regulation of DNA-templated transcription"/>
    <property type="evidence" value="ECO:0000304"/>
    <property type="project" value="TAIR"/>
</dbReference>
<dbReference type="InterPro" id="IPR044607">
    <property type="entry name" value="RKD-like"/>
</dbReference>
<dbReference type="InterPro" id="IPR003035">
    <property type="entry name" value="RWP-RK_dom"/>
</dbReference>
<dbReference type="PANTHER" id="PTHR46373:SF7">
    <property type="entry name" value="PROTEIN RKD2"/>
    <property type="match status" value="1"/>
</dbReference>
<dbReference type="PANTHER" id="PTHR46373">
    <property type="entry name" value="PROTEIN RKD4"/>
    <property type="match status" value="1"/>
</dbReference>
<dbReference type="Pfam" id="PF02042">
    <property type="entry name" value="RWP-RK"/>
    <property type="match status" value="1"/>
</dbReference>
<dbReference type="PROSITE" id="PS51519">
    <property type="entry name" value="RWP_RK"/>
    <property type="match status" value="1"/>
</dbReference>
<organism>
    <name type="scientific">Arabidopsis thaliana</name>
    <name type="common">Mouse-ear cress</name>
    <dbReference type="NCBI Taxonomy" id="3702"/>
    <lineage>
        <taxon>Eukaryota</taxon>
        <taxon>Viridiplantae</taxon>
        <taxon>Streptophyta</taxon>
        <taxon>Embryophyta</taxon>
        <taxon>Tracheophyta</taxon>
        <taxon>Spermatophyta</taxon>
        <taxon>Magnoliopsida</taxon>
        <taxon>eudicotyledons</taxon>
        <taxon>Gunneridae</taxon>
        <taxon>Pentapetalae</taxon>
        <taxon>rosids</taxon>
        <taxon>malvids</taxon>
        <taxon>Brassicales</taxon>
        <taxon>Brassicaceae</taxon>
        <taxon>Camelineae</taxon>
        <taxon>Arabidopsis</taxon>
    </lineage>
</organism>